<reference key="1">
    <citation type="journal article" date="2000" name="Nature">
        <title>Sequence and analysis of chromosome 3 of the plant Arabidopsis thaliana.</title>
        <authorList>
            <person name="Salanoubat M."/>
            <person name="Lemcke K."/>
            <person name="Rieger M."/>
            <person name="Ansorge W."/>
            <person name="Unseld M."/>
            <person name="Fartmann B."/>
            <person name="Valle G."/>
            <person name="Bloecker H."/>
            <person name="Perez-Alonso M."/>
            <person name="Obermaier B."/>
            <person name="Delseny M."/>
            <person name="Boutry M."/>
            <person name="Grivell L.A."/>
            <person name="Mache R."/>
            <person name="Puigdomenech P."/>
            <person name="De Simone V."/>
            <person name="Choisne N."/>
            <person name="Artiguenave F."/>
            <person name="Robert C."/>
            <person name="Brottier P."/>
            <person name="Wincker P."/>
            <person name="Cattolico L."/>
            <person name="Weissenbach J."/>
            <person name="Saurin W."/>
            <person name="Quetier F."/>
            <person name="Schaefer M."/>
            <person name="Mueller-Auer S."/>
            <person name="Gabel C."/>
            <person name="Fuchs M."/>
            <person name="Benes V."/>
            <person name="Wurmbach E."/>
            <person name="Drzonek H."/>
            <person name="Erfle H."/>
            <person name="Jordan N."/>
            <person name="Bangert S."/>
            <person name="Wiedelmann R."/>
            <person name="Kranz H."/>
            <person name="Voss H."/>
            <person name="Holland R."/>
            <person name="Brandt P."/>
            <person name="Nyakatura G."/>
            <person name="Vezzi A."/>
            <person name="D'Angelo M."/>
            <person name="Pallavicini A."/>
            <person name="Toppo S."/>
            <person name="Simionati B."/>
            <person name="Conrad A."/>
            <person name="Hornischer K."/>
            <person name="Kauer G."/>
            <person name="Loehnert T.-H."/>
            <person name="Nordsiek G."/>
            <person name="Reichelt J."/>
            <person name="Scharfe M."/>
            <person name="Schoen O."/>
            <person name="Bargues M."/>
            <person name="Terol J."/>
            <person name="Climent J."/>
            <person name="Navarro P."/>
            <person name="Collado C."/>
            <person name="Perez-Perez A."/>
            <person name="Ottenwaelder B."/>
            <person name="Duchemin D."/>
            <person name="Cooke R."/>
            <person name="Laudie M."/>
            <person name="Berger-Llauro C."/>
            <person name="Purnelle B."/>
            <person name="Masuy D."/>
            <person name="de Haan M."/>
            <person name="Maarse A.C."/>
            <person name="Alcaraz J.-P."/>
            <person name="Cottet A."/>
            <person name="Casacuberta E."/>
            <person name="Monfort A."/>
            <person name="Argiriou A."/>
            <person name="Flores M."/>
            <person name="Liguori R."/>
            <person name="Vitale D."/>
            <person name="Mannhaupt G."/>
            <person name="Haase D."/>
            <person name="Schoof H."/>
            <person name="Rudd S."/>
            <person name="Zaccaria P."/>
            <person name="Mewes H.-W."/>
            <person name="Mayer K.F.X."/>
            <person name="Kaul S."/>
            <person name="Town C.D."/>
            <person name="Koo H.L."/>
            <person name="Tallon L.J."/>
            <person name="Jenkins J."/>
            <person name="Rooney T."/>
            <person name="Rizzo M."/>
            <person name="Walts A."/>
            <person name="Utterback T."/>
            <person name="Fujii C.Y."/>
            <person name="Shea T.P."/>
            <person name="Creasy T.H."/>
            <person name="Haas B."/>
            <person name="Maiti R."/>
            <person name="Wu D."/>
            <person name="Peterson J."/>
            <person name="Van Aken S."/>
            <person name="Pai G."/>
            <person name="Militscher J."/>
            <person name="Sellers P."/>
            <person name="Gill J.E."/>
            <person name="Feldblyum T.V."/>
            <person name="Preuss D."/>
            <person name="Lin X."/>
            <person name="Nierman W.C."/>
            <person name="Salzberg S.L."/>
            <person name="White O."/>
            <person name="Venter J.C."/>
            <person name="Fraser C.M."/>
            <person name="Kaneko T."/>
            <person name="Nakamura Y."/>
            <person name="Sato S."/>
            <person name="Kato T."/>
            <person name="Asamizu E."/>
            <person name="Sasamoto S."/>
            <person name="Kimura T."/>
            <person name="Idesawa K."/>
            <person name="Kawashima K."/>
            <person name="Kishida Y."/>
            <person name="Kiyokawa C."/>
            <person name="Kohara M."/>
            <person name="Matsumoto M."/>
            <person name="Matsuno A."/>
            <person name="Muraki A."/>
            <person name="Nakayama S."/>
            <person name="Nakazaki N."/>
            <person name="Shinpo S."/>
            <person name="Takeuchi C."/>
            <person name="Wada T."/>
            <person name="Watanabe A."/>
            <person name="Yamada M."/>
            <person name="Yasuda M."/>
            <person name="Tabata S."/>
        </authorList>
    </citation>
    <scope>NUCLEOTIDE SEQUENCE [LARGE SCALE GENOMIC DNA]</scope>
    <source>
        <strain>cv. Columbia</strain>
    </source>
</reference>
<reference key="2">
    <citation type="journal article" date="2017" name="Plant J.">
        <title>Araport11: a complete reannotation of the Arabidopsis thaliana reference genome.</title>
        <authorList>
            <person name="Cheng C.Y."/>
            <person name="Krishnakumar V."/>
            <person name="Chan A.P."/>
            <person name="Thibaud-Nissen F."/>
            <person name="Schobel S."/>
            <person name="Town C.D."/>
        </authorList>
    </citation>
    <scope>GENOME REANNOTATION</scope>
    <source>
        <strain>cv. Columbia</strain>
    </source>
</reference>
<reference key="3">
    <citation type="journal article" date="2003" name="Science">
        <title>Empirical analysis of transcriptional activity in the Arabidopsis genome.</title>
        <authorList>
            <person name="Yamada K."/>
            <person name="Lim J."/>
            <person name="Dale J.M."/>
            <person name="Chen H."/>
            <person name="Shinn P."/>
            <person name="Palm C.J."/>
            <person name="Southwick A.M."/>
            <person name="Wu H.C."/>
            <person name="Kim C.J."/>
            <person name="Nguyen M."/>
            <person name="Pham P.K."/>
            <person name="Cheuk R.F."/>
            <person name="Karlin-Newmann G."/>
            <person name="Liu S.X."/>
            <person name="Lam B."/>
            <person name="Sakano H."/>
            <person name="Wu T."/>
            <person name="Yu G."/>
            <person name="Miranda M."/>
            <person name="Quach H.L."/>
            <person name="Tripp M."/>
            <person name="Chang C.H."/>
            <person name="Lee J.M."/>
            <person name="Toriumi M.J."/>
            <person name="Chan M.M."/>
            <person name="Tang C.C."/>
            <person name="Onodera C.S."/>
            <person name="Deng J.M."/>
            <person name="Akiyama K."/>
            <person name="Ansari Y."/>
            <person name="Arakawa T."/>
            <person name="Banh J."/>
            <person name="Banno F."/>
            <person name="Bowser L."/>
            <person name="Brooks S.Y."/>
            <person name="Carninci P."/>
            <person name="Chao Q."/>
            <person name="Choy N."/>
            <person name="Enju A."/>
            <person name="Goldsmith A.D."/>
            <person name="Gurjal M."/>
            <person name="Hansen N.F."/>
            <person name="Hayashizaki Y."/>
            <person name="Johnson-Hopson C."/>
            <person name="Hsuan V.W."/>
            <person name="Iida K."/>
            <person name="Karnes M."/>
            <person name="Khan S."/>
            <person name="Koesema E."/>
            <person name="Ishida J."/>
            <person name="Jiang P.X."/>
            <person name="Jones T."/>
            <person name="Kawai J."/>
            <person name="Kamiya A."/>
            <person name="Meyers C."/>
            <person name="Nakajima M."/>
            <person name="Narusaka M."/>
            <person name="Seki M."/>
            <person name="Sakurai T."/>
            <person name="Satou M."/>
            <person name="Tamse R."/>
            <person name="Vaysberg M."/>
            <person name="Wallender E.K."/>
            <person name="Wong C."/>
            <person name="Yamamura Y."/>
            <person name="Yuan S."/>
            <person name="Shinozaki K."/>
            <person name="Davis R.W."/>
            <person name="Theologis A."/>
            <person name="Ecker J.R."/>
        </authorList>
    </citation>
    <scope>NUCLEOTIDE SEQUENCE [LARGE SCALE MRNA]</scope>
    <source>
        <strain>cv. Columbia</strain>
    </source>
</reference>
<reference key="4">
    <citation type="journal article" date="2008" name="Plant Physiol.">
        <title>Sequence variation of microRNAs and their binding sites in Arabidopsis.</title>
        <authorList>
            <person name="Ehrenreich I.M."/>
            <person name="Purugganan M.D."/>
        </authorList>
    </citation>
    <scope>NUCLEOTIDE SEQUENCE [GENOMIC DNA] OF 180-354</scope>
    <scope>VARIANT THR-305</scope>
    <source>
        <strain>cv. Ag-0</strain>
        <strain>cv. An-1</strain>
        <strain>cv. Bay-0</strain>
        <strain>cv. Br-0</strain>
        <strain>cv. C24</strain>
        <strain>cv. Ct-0</strain>
        <strain>cv. Cvi-0</strain>
        <strain>cv. Edi-0</strain>
        <strain>cv. Ei-2</strain>
        <strain>cv. Ga-0</strain>
        <strain>cv. Gy-0</strain>
        <strain>cv. Kas-2</strain>
        <strain>cv. Ll-0</strain>
        <strain>cv. Mrk-0</strain>
        <strain>cv. Ms-0</strain>
        <strain>cv. Mt-0</strain>
        <strain>cv. Nd-1</strain>
        <strain>cv. Nok-3</strain>
        <strain>cv. Oy-0</strain>
        <strain>cv. Sorbo</strain>
        <strain>cv. Wa-1</strain>
        <strain>cv. Wassilewskija</strain>
        <strain>cv. Wei-0</strain>
        <strain>cv. Wt-5</strain>
    </source>
</reference>
<reference key="5">
    <citation type="journal article" date="2004" name="Plant Mol. Biol.">
        <title>Genome-wide analysis of the GRAS gene family in rice and Arabidopsis.</title>
        <authorList>
            <person name="Tian C."/>
            <person name="Wan P."/>
            <person name="Sun S."/>
            <person name="Li J."/>
            <person name="Chen M."/>
        </authorList>
    </citation>
    <scope>GENE FAMILY</scope>
</reference>
<reference key="6">
    <citation type="journal article" date="2008" name="Plant Mol. Biol.">
        <title>Large-scale analysis of the GRAS gene family in Arabidopsis thaliana.</title>
        <authorList>
            <person name="Lee M.-H."/>
            <person name="Kim B."/>
            <person name="Song S.-K."/>
            <person name="Heo J.-O."/>
            <person name="Yu N.-I."/>
            <person name="Lee S.A."/>
            <person name="Kim M."/>
            <person name="Kim D.G."/>
            <person name="Sohn S.O."/>
            <person name="Lim C.E."/>
            <person name="Chang K.S."/>
            <person name="Lee M.M."/>
            <person name="Lim J."/>
        </authorList>
    </citation>
    <scope>GENE FAMILY</scope>
    <scope>TISSUE SPECIFICITY</scope>
</reference>
<protein>
    <recommendedName>
        <fullName>Scarecrow-like protein 22</fullName>
        <shortName>AtSCL22</shortName>
    </recommendedName>
    <alternativeName>
        <fullName>GRAS family protein 21</fullName>
        <shortName>AtGRAS-21</shortName>
    </alternativeName>
    <alternativeName>
        <fullName>SCL6-III</fullName>
    </alternativeName>
</protein>
<evidence type="ECO:0000250" key="1"/>
<evidence type="ECO:0000255" key="2">
    <source>
        <dbReference type="PROSITE-ProRule" id="PRU01191"/>
    </source>
</evidence>
<evidence type="ECO:0000256" key="3">
    <source>
        <dbReference type="SAM" id="MobiDB-lite"/>
    </source>
</evidence>
<evidence type="ECO:0000269" key="4">
    <source>
    </source>
</evidence>
<evidence type="ECO:0000269" key="5">
    <source>
    </source>
</evidence>
<evidence type="ECO:0000305" key="6"/>
<feature type="chain" id="PRO_0000350861" description="Scarecrow-like protein 22">
    <location>
        <begin position="1"/>
        <end position="623"/>
    </location>
</feature>
<feature type="domain" description="GRAS" evidence="2">
    <location>
        <begin position="235"/>
        <end position="622"/>
    </location>
</feature>
<feature type="region of interest" description="Disordered" evidence="3">
    <location>
        <begin position="62"/>
        <end position="90"/>
    </location>
</feature>
<feature type="region of interest" description="Disordered" evidence="3">
    <location>
        <begin position="179"/>
        <end position="203"/>
    </location>
</feature>
<feature type="region of interest" description="Leucine repeat I (LRI)" evidence="2">
    <location>
        <begin position="242"/>
        <end position="311"/>
    </location>
</feature>
<feature type="region of interest" description="VHIID" evidence="2">
    <location>
        <begin position="330"/>
        <end position="398"/>
    </location>
</feature>
<feature type="region of interest" description="Leucine repeat II (LRII)" evidence="2">
    <location>
        <begin position="413"/>
        <end position="448"/>
    </location>
</feature>
<feature type="region of interest" description="PFYRE" evidence="2">
    <location>
        <begin position="458"/>
        <end position="545"/>
    </location>
</feature>
<feature type="region of interest" description="SAW" evidence="2">
    <location>
        <begin position="548"/>
        <end position="622"/>
    </location>
</feature>
<feature type="short sequence motif" description="VHIID" evidence="2">
    <location>
        <begin position="361"/>
        <end position="365"/>
    </location>
</feature>
<feature type="compositionally biased region" description="Low complexity" evidence="3">
    <location>
        <begin position="63"/>
        <end position="80"/>
    </location>
</feature>
<feature type="sequence variant" description="In strain: cv. cv. Ag-0, cv. Bay-0, cv. C24, cv. Ct-0, cv. Cvi-0, cv. Kas-2, cv. Mrk-0, cv. Ms-0, cv. Mt-0, cv. Nok-3, cv. Oy-0, cv. Sorbo, cv. Wa-1, cv. Wei-0 and cv. Wt-5." evidence="4">
    <original>S</original>
    <variation>T</variation>
    <location>
        <position position="305"/>
    </location>
</feature>
<comment type="function">
    <text evidence="1">Probable transcription factor involved in plant development.</text>
</comment>
<comment type="interaction">
    <interactant intactId="EBI-4424954">
        <id>Q9M000</id>
    </interactant>
    <interactant intactId="EBI-25518084">
        <id>Q8GZ67</id>
        <label>At1g68160/T22E19_21</label>
    </interactant>
    <organismsDiffer>false</organismsDiffer>
    <experiments>3</experiments>
</comment>
<comment type="interaction">
    <interactant intactId="EBI-4424954">
        <id>Q9M000</id>
    </interactant>
    <interactant intactId="EBI-25517212">
        <id>Q93WB2</id>
        <label>At5g25280</label>
    </interactant>
    <organismsDiffer>false</organismsDiffer>
    <experiments>3</experiments>
</comment>
<comment type="interaction">
    <interactant intactId="EBI-4424954">
        <id>Q9M000</id>
    </interactant>
    <interactant intactId="EBI-4442347">
        <id>Q93Z18</id>
        <label>CKL3</label>
    </interactant>
    <organismsDiffer>false</organismsDiffer>
    <experiments>3</experiments>
</comment>
<comment type="interaction">
    <interactant intactId="EBI-4424954">
        <id>Q9M000</id>
    </interactant>
    <interactant intactId="EBI-4426026">
        <id>Q9C7G6</id>
        <label>GNAT10</label>
    </interactant>
    <organismsDiffer>false</organismsDiffer>
    <experiments>4</experiments>
</comment>
<comment type="interaction">
    <interactant intactId="EBI-4424954">
        <id>Q9M000</id>
    </interactant>
    <interactant intactId="EBI-4424960">
        <id>Q84JH7</id>
        <label>SIRB</label>
    </interactant>
    <organismsDiffer>false</organismsDiffer>
    <experiments>4</experiments>
</comment>
<comment type="subcellular location">
    <subcellularLocation>
        <location evidence="6">Nucleus</location>
    </subcellularLocation>
</comment>
<comment type="tissue specificity">
    <text evidence="5">Expressed in seedlings, roots, leaves and flowers.</text>
</comment>
<comment type="similarity">
    <text evidence="6">Belongs to the GRAS family.</text>
</comment>
<name>SCL22_ARATH</name>
<keyword id="KW-0539">Nucleus</keyword>
<keyword id="KW-1185">Reference proteome</keyword>
<keyword id="KW-0804">Transcription</keyword>
<keyword id="KW-0805">Transcription regulation</keyword>
<dbReference type="EMBL" id="AL162295">
    <property type="protein sequence ID" value="CAB82667.1"/>
    <property type="molecule type" value="Genomic_DNA"/>
</dbReference>
<dbReference type="EMBL" id="CP002686">
    <property type="protein sequence ID" value="AEE80090.1"/>
    <property type="molecule type" value="Genomic_DNA"/>
</dbReference>
<dbReference type="EMBL" id="AY064062">
    <property type="protein sequence ID" value="AAL36418.1"/>
    <property type="molecule type" value="mRNA"/>
</dbReference>
<dbReference type="EMBL" id="AY096372">
    <property type="protein sequence ID" value="AAM20013.1"/>
    <property type="molecule type" value="mRNA"/>
</dbReference>
<dbReference type="EMBL" id="EU550731">
    <property type="protein sequence ID" value="ACB31493.1"/>
    <property type="molecule type" value="Genomic_DNA"/>
</dbReference>
<dbReference type="EMBL" id="EU550732">
    <property type="protein sequence ID" value="ACB31494.1"/>
    <property type="molecule type" value="Genomic_DNA"/>
</dbReference>
<dbReference type="EMBL" id="EU550733">
    <property type="protein sequence ID" value="ACB31495.1"/>
    <property type="molecule type" value="Genomic_DNA"/>
</dbReference>
<dbReference type="EMBL" id="EU550734">
    <property type="protein sequence ID" value="ACB31496.1"/>
    <property type="molecule type" value="Genomic_DNA"/>
</dbReference>
<dbReference type="EMBL" id="EU550735">
    <property type="protein sequence ID" value="ACB31497.1"/>
    <property type="molecule type" value="Genomic_DNA"/>
</dbReference>
<dbReference type="EMBL" id="EU550736">
    <property type="protein sequence ID" value="ACB31498.1"/>
    <property type="molecule type" value="Genomic_DNA"/>
</dbReference>
<dbReference type="EMBL" id="EU550737">
    <property type="protein sequence ID" value="ACB31499.1"/>
    <property type="molecule type" value="Genomic_DNA"/>
</dbReference>
<dbReference type="EMBL" id="EU550738">
    <property type="protein sequence ID" value="ACB31500.1"/>
    <property type="molecule type" value="Genomic_DNA"/>
</dbReference>
<dbReference type="EMBL" id="EU550739">
    <property type="protein sequence ID" value="ACB31501.1"/>
    <property type="molecule type" value="Genomic_DNA"/>
</dbReference>
<dbReference type="EMBL" id="EU550740">
    <property type="protein sequence ID" value="ACB31502.1"/>
    <property type="molecule type" value="Genomic_DNA"/>
</dbReference>
<dbReference type="EMBL" id="EU550741">
    <property type="protein sequence ID" value="ACB31503.1"/>
    <property type="molecule type" value="Genomic_DNA"/>
</dbReference>
<dbReference type="EMBL" id="EU550742">
    <property type="protein sequence ID" value="ACB31504.1"/>
    <property type="molecule type" value="Genomic_DNA"/>
</dbReference>
<dbReference type="EMBL" id="EU550743">
    <property type="protein sequence ID" value="ACB31505.1"/>
    <property type="molecule type" value="Genomic_DNA"/>
</dbReference>
<dbReference type="EMBL" id="EU550744">
    <property type="protein sequence ID" value="ACB31506.1"/>
    <property type="molecule type" value="Genomic_DNA"/>
</dbReference>
<dbReference type="EMBL" id="EU550745">
    <property type="protein sequence ID" value="ACB31507.1"/>
    <property type="molecule type" value="Genomic_DNA"/>
</dbReference>
<dbReference type="EMBL" id="EU550746">
    <property type="protein sequence ID" value="ACB31508.1"/>
    <property type="molecule type" value="Genomic_DNA"/>
</dbReference>
<dbReference type="EMBL" id="EU550747">
    <property type="protein sequence ID" value="ACB31509.1"/>
    <property type="molecule type" value="Genomic_DNA"/>
</dbReference>
<dbReference type="EMBL" id="EU550748">
    <property type="protein sequence ID" value="ACB31510.1"/>
    <property type="molecule type" value="Genomic_DNA"/>
</dbReference>
<dbReference type="EMBL" id="EU550749">
    <property type="protein sequence ID" value="ACB31511.1"/>
    <property type="molecule type" value="Genomic_DNA"/>
</dbReference>
<dbReference type="EMBL" id="EU550750">
    <property type="protein sequence ID" value="ACB31512.1"/>
    <property type="molecule type" value="Genomic_DNA"/>
</dbReference>
<dbReference type="EMBL" id="EU550752">
    <property type="protein sequence ID" value="ACB31514.1"/>
    <property type="molecule type" value="Genomic_DNA"/>
</dbReference>
<dbReference type="EMBL" id="EU550754">
    <property type="protein sequence ID" value="ACB31516.1"/>
    <property type="molecule type" value="Genomic_DNA"/>
</dbReference>
<dbReference type="EMBL" id="EU550751">
    <property type="protein sequence ID" value="ACB31513.1"/>
    <property type="molecule type" value="Genomic_DNA"/>
</dbReference>
<dbReference type="EMBL" id="EU550753">
    <property type="protein sequence ID" value="ACB31515.1"/>
    <property type="molecule type" value="Genomic_DNA"/>
</dbReference>
<dbReference type="PIR" id="T47874">
    <property type="entry name" value="T47874"/>
</dbReference>
<dbReference type="SMR" id="Q9M000"/>
<dbReference type="BioGRID" id="10548">
    <property type="interactions" value="10"/>
</dbReference>
<dbReference type="FunCoup" id="Q9M000">
    <property type="interactions" value="93"/>
</dbReference>
<dbReference type="IntAct" id="Q9M000">
    <property type="interactions" value="7"/>
</dbReference>
<dbReference type="STRING" id="3702.Q9M000"/>
<dbReference type="PaxDb" id="3702-AT3G60630.1"/>
<dbReference type="ProteomicsDB" id="232805"/>
<dbReference type="EnsemblPlants" id="AT3G60630.1">
    <property type="protein sequence ID" value="AT3G60630.1"/>
    <property type="gene ID" value="AT3G60630"/>
</dbReference>
<dbReference type="Gramene" id="AT3G60630.1">
    <property type="protein sequence ID" value="AT3G60630.1"/>
    <property type="gene ID" value="AT3G60630"/>
</dbReference>
<dbReference type="KEGG" id="ath:AT3G60630"/>
<dbReference type="Araport" id="AT3G60630"/>
<dbReference type="TAIR" id="AT3G60630">
    <property type="gene designation" value="HAM2"/>
</dbReference>
<dbReference type="eggNOG" id="ENOG502QQQC">
    <property type="taxonomic scope" value="Eukaryota"/>
</dbReference>
<dbReference type="HOGENOM" id="CLU_013139_1_0_1"/>
<dbReference type="InParanoid" id="Q9M000"/>
<dbReference type="OMA" id="YRWMERS"/>
<dbReference type="PhylomeDB" id="Q9M000"/>
<dbReference type="PRO" id="PR:Q9M000"/>
<dbReference type="Proteomes" id="UP000006548">
    <property type="component" value="Chromosome 3"/>
</dbReference>
<dbReference type="ExpressionAtlas" id="Q9M000">
    <property type="expression patterns" value="baseline and differential"/>
</dbReference>
<dbReference type="GO" id="GO:0005634">
    <property type="term" value="C:nucleus"/>
    <property type="evidence" value="ECO:0007669"/>
    <property type="project" value="UniProtKB-SubCell"/>
</dbReference>
<dbReference type="GO" id="GO:0003700">
    <property type="term" value="F:DNA-binding transcription factor activity"/>
    <property type="evidence" value="ECO:0000250"/>
    <property type="project" value="TAIR"/>
</dbReference>
<dbReference type="GO" id="GO:0030154">
    <property type="term" value="P:cell differentiation"/>
    <property type="evidence" value="ECO:0000315"/>
    <property type="project" value="TAIR"/>
</dbReference>
<dbReference type="GO" id="GO:0051301">
    <property type="term" value="P:cell division"/>
    <property type="evidence" value="ECO:0000315"/>
    <property type="project" value="TAIR"/>
</dbReference>
<dbReference type="GO" id="GO:0006355">
    <property type="term" value="P:regulation of DNA-templated transcription"/>
    <property type="evidence" value="ECO:0000304"/>
    <property type="project" value="TAIR"/>
</dbReference>
<dbReference type="GO" id="GO:0048768">
    <property type="term" value="P:root hair cell tip growth"/>
    <property type="evidence" value="ECO:0000315"/>
    <property type="project" value="TAIR"/>
</dbReference>
<dbReference type="InterPro" id="IPR005202">
    <property type="entry name" value="TF_GRAS"/>
</dbReference>
<dbReference type="PANTHER" id="PTHR31636">
    <property type="entry name" value="OSJNBA0084A10.13 PROTEIN-RELATED"/>
    <property type="match status" value="1"/>
</dbReference>
<dbReference type="Pfam" id="PF03514">
    <property type="entry name" value="GRAS"/>
    <property type="match status" value="1"/>
</dbReference>
<dbReference type="PROSITE" id="PS50985">
    <property type="entry name" value="GRAS"/>
    <property type="match status" value="1"/>
</dbReference>
<sequence>MPLPFEQFQGKGVLGFLDSSSSPGYKIWANPEKLHGRVEEDLCFVVNNGGFSEPTSVLDSVRSPSPFVSSSTTTLSSSHGGPSGGGAAAATFSGADGKCDQMGFEDLDGVLSGGSPGQEQSIFRLIMAGDVVDPGSEFVGFDIGSGSDPVIDNPNPLFGYGFPFQNAPEEEKFQISINPNPGFFSDPPSSPPAKRLNSGQPGSQHLQWVFPFSDPGHESHDPFLTPPKIAGEDQNDQDQSAVIIDQLFSAAAELTTNGGDNNPVLAQGILARLNHNLNNNNDDTNNNPKPPFHRAASYITEALHSLLQDSSLSPPSLSPPQNLIFRIAAYRAFSETSPFLQFVNFTANQTILESFEGFDRIHIVDFDIGYGGQWASLIQELAGKRNRSSSAPSLKITAFASPSTVSDEFELRFTEENLRSFAGETGVSFEIELLNMEILLNPTYWPLSLFRSSEKEAIAVNLPISSMVSGYLPLILRFLKQISPNVVVCSDRSCDRNNDAPFPNGVINALQYYTSLLESLDSGNLNNAEAATSIERFCVQPSIQKLLTNRYRWMERSPPWRSLFGQCGFTPVTLSQTAETQAEYLLQRNPMRGFHLEKRQSSSPSLVLCWQRKELVTVSAWKC</sequence>
<proteinExistence type="evidence at protein level"/>
<organism>
    <name type="scientific">Arabidopsis thaliana</name>
    <name type="common">Mouse-ear cress</name>
    <dbReference type="NCBI Taxonomy" id="3702"/>
    <lineage>
        <taxon>Eukaryota</taxon>
        <taxon>Viridiplantae</taxon>
        <taxon>Streptophyta</taxon>
        <taxon>Embryophyta</taxon>
        <taxon>Tracheophyta</taxon>
        <taxon>Spermatophyta</taxon>
        <taxon>Magnoliopsida</taxon>
        <taxon>eudicotyledons</taxon>
        <taxon>Gunneridae</taxon>
        <taxon>Pentapetalae</taxon>
        <taxon>rosids</taxon>
        <taxon>malvids</taxon>
        <taxon>Brassicales</taxon>
        <taxon>Brassicaceae</taxon>
        <taxon>Camelineae</taxon>
        <taxon>Arabidopsis</taxon>
    </lineage>
</organism>
<gene>
    <name type="primary">SCL22</name>
    <name type="ordered locus">At3g60630</name>
    <name type="ORF">T4C21.40</name>
</gene>
<accession>Q9M000</accession>
<accession>B2CV30</accession>
<accession>B2CV32</accession>